<sequence>MGWFFQKKKEFDFGGELDRLEMKLEEAQYNIDNIQSQKKKILFRYTVCSLAIYTIGMAVWASRSSILFQHPLFSKLFRISLYILGVFSLYMFRWAIAWFCEKRLSRARMNLHKLNAEKRKILDALKSRKEYFETQALLEKYGEQPTLAQKKLSNAAAAKSVPGSSSSSSDPMHPQHWYDRVLEGLVGANENSENNREALICSHCFHHNGLASYGEKASDVRYVCLFCKAWNGPPIDKSLPSSEMDSNLQTNPSSISKGKKNNSNNTTQKGPNIISSPQVINASSPVRKAGKKKSKKALPTSPLSSSSPDASYNSVSDSFHTVAASVPESLTPTK</sequence>
<dbReference type="EMBL" id="CU329672">
    <property type="protein sequence ID" value="CAA22491.1"/>
    <property type="molecule type" value="Genomic_DNA"/>
</dbReference>
<dbReference type="PIR" id="T41037">
    <property type="entry name" value="T41037"/>
</dbReference>
<dbReference type="RefSeq" id="NP_588465.1">
    <property type="nucleotide sequence ID" value="NM_001023456.2"/>
</dbReference>
<dbReference type="SMR" id="O94414"/>
<dbReference type="BioGRID" id="275515">
    <property type="interactions" value="12"/>
</dbReference>
<dbReference type="FunCoup" id="O94414">
    <property type="interactions" value="89"/>
</dbReference>
<dbReference type="STRING" id="284812.O94414"/>
<dbReference type="iPTMnet" id="O94414"/>
<dbReference type="PaxDb" id="4896-SPCC1620.07c.1"/>
<dbReference type="EnsemblFungi" id="SPCC1620.07c.1">
    <property type="protein sequence ID" value="SPCC1620.07c.1:pep"/>
    <property type="gene ID" value="SPCC1620.07c"/>
</dbReference>
<dbReference type="GeneID" id="2538940"/>
<dbReference type="KEGG" id="spo:2538940"/>
<dbReference type="PomBase" id="SPCC1620.07c">
    <property type="gene designation" value="lnp1"/>
</dbReference>
<dbReference type="VEuPathDB" id="FungiDB:SPCC1620.07c"/>
<dbReference type="eggNOG" id="KOG2846">
    <property type="taxonomic scope" value="Eukaryota"/>
</dbReference>
<dbReference type="HOGENOM" id="CLU_831981_0_0_1"/>
<dbReference type="InParanoid" id="O94414"/>
<dbReference type="OMA" id="ANDNKTH"/>
<dbReference type="PhylomeDB" id="O94414"/>
<dbReference type="PRO" id="PR:O94414"/>
<dbReference type="Proteomes" id="UP000002485">
    <property type="component" value="Chromosome III"/>
</dbReference>
<dbReference type="GO" id="GO:0005783">
    <property type="term" value="C:endoplasmic reticulum"/>
    <property type="evidence" value="ECO:0000314"/>
    <property type="project" value="PomBase"/>
</dbReference>
<dbReference type="GO" id="GO:0005789">
    <property type="term" value="C:endoplasmic reticulum membrane"/>
    <property type="evidence" value="ECO:0007669"/>
    <property type="project" value="UniProtKB-SubCell"/>
</dbReference>
<dbReference type="GO" id="GO:0071782">
    <property type="term" value="C:endoplasmic reticulum tubular network"/>
    <property type="evidence" value="ECO:0000318"/>
    <property type="project" value="GO_Central"/>
</dbReference>
<dbReference type="GO" id="GO:0005794">
    <property type="term" value="C:Golgi apparatus"/>
    <property type="evidence" value="ECO:0007005"/>
    <property type="project" value="PomBase"/>
</dbReference>
<dbReference type="GO" id="GO:0000139">
    <property type="term" value="C:Golgi membrane"/>
    <property type="evidence" value="ECO:0007669"/>
    <property type="project" value="UniProtKB-SubCell"/>
</dbReference>
<dbReference type="GO" id="GO:0005635">
    <property type="term" value="C:nuclear envelope"/>
    <property type="evidence" value="ECO:0000314"/>
    <property type="project" value="PomBase"/>
</dbReference>
<dbReference type="GO" id="GO:0008270">
    <property type="term" value="F:zinc ion binding"/>
    <property type="evidence" value="ECO:0007669"/>
    <property type="project" value="UniProtKB-KW"/>
</dbReference>
<dbReference type="GO" id="GO:1990809">
    <property type="term" value="P:endoplasmic reticulum tubular network membrane organization"/>
    <property type="evidence" value="ECO:0000266"/>
    <property type="project" value="PomBase"/>
</dbReference>
<dbReference type="GO" id="GO:0071786">
    <property type="term" value="P:endoplasmic reticulum tubular network organization"/>
    <property type="evidence" value="ECO:0000318"/>
    <property type="project" value="GO_Central"/>
</dbReference>
<dbReference type="InterPro" id="IPR040115">
    <property type="entry name" value="Lnp"/>
</dbReference>
<dbReference type="InterPro" id="IPR019273">
    <property type="entry name" value="Lunapark_Znf"/>
</dbReference>
<dbReference type="PANTHER" id="PTHR22166">
    <property type="entry name" value="ENDOPLASMIC RETICULUM JUNCTION FORMATION PROTEIN LUNAPARK"/>
    <property type="match status" value="1"/>
</dbReference>
<dbReference type="PANTHER" id="PTHR22166:SF12">
    <property type="entry name" value="ENDOPLASMIC RETICULUM JUNCTION FORMATION PROTEIN LUNAPARK"/>
    <property type="match status" value="1"/>
</dbReference>
<dbReference type="Pfam" id="PF10058">
    <property type="entry name" value="Zn_ribbon_10"/>
    <property type="match status" value="1"/>
</dbReference>
<name>LNP_SCHPO</name>
<evidence type="ECO:0000250" key="1"/>
<evidence type="ECO:0000250" key="2">
    <source>
        <dbReference type="UniProtKB" id="Q9C0E8"/>
    </source>
</evidence>
<evidence type="ECO:0000255" key="3"/>
<evidence type="ECO:0000256" key="4">
    <source>
        <dbReference type="SAM" id="MobiDB-lite"/>
    </source>
</evidence>
<evidence type="ECO:0000269" key="5">
    <source>
    </source>
</evidence>
<evidence type="ECO:0000269" key="6">
    <source>
    </source>
</evidence>
<evidence type="ECO:0000305" key="7"/>
<reference key="1">
    <citation type="journal article" date="2002" name="Nature">
        <title>The genome sequence of Schizosaccharomyces pombe.</title>
        <authorList>
            <person name="Wood V."/>
            <person name="Gwilliam R."/>
            <person name="Rajandream M.A."/>
            <person name="Lyne M.H."/>
            <person name="Lyne R."/>
            <person name="Stewart A."/>
            <person name="Sgouros J.G."/>
            <person name="Peat N."/>
            <person name="Hayles J."/>
            <person name="Baker S.G."/>
            <person name="Basham D."/>
            <person name="Bowman S."/>
            <person name="Brooks K."/>
            <person name="Brown D."/>
            <person name="Brown S."/>
            <person name="Chillingworth T."/>
            <person name="Churcher C.M."/>
            <person name="Collins M."/>
            <person name="Connor R."/>
            <person name="Cronin A."/>
            <person name="Davis P."/>
            <person name="Feltwell T."/>
            <person name="Fraser A."/>
            <person name="Gentles S."/>
            <person name="Goble A."/>
            <person name="Hamlin N."/>
            <person name="Harris D.E."/>
            <person name="Hidalgo J."/>
            <person name="Hodgson G."/>
            <person name="Holroyd S."/>
            <person name="Hornsby T."/>
            <person name="Howarth S."/>
            <person name="Huckle E.J."/>
            <person name="Hunt S."/>
            <person name="Jagels K."/>
            <person name="James K.D."/>
            <person name="Jones L."/>
            <person name="Jones M."/>
            <person name="Leather S."/>
            <person name="McDonald S."/>
            <person name="McLean J."/>
            <person name="Mooney P."/>
            <person name="Moule S."/>
            <person name="Mungall K.L."/>
            <person name="Murphy L.D."/>
            <person name="Niblett D."/>
            <person name="Odell C."/>
            <person name="Oliver K."/>
            <person name="O'Neil S."/>
            <person name="Pearson D."/>
            <person name="Quail M.A."/>
            <person name="Rabbinowitsch E."/>
            <person name="Rutherford K.M."/>
            <person name="Rutter S."/>
            <person name="Saunders D."/>
            <person name="Seeger K."/>
            <person name="Sharp S."/>
            <person name="Skelton J."/>
            <person name="Simmonds M.N."/>
            <person name="Squares R."/>
            <person name="Squares S."/>
            <person name="Stevens K."/>
            <person name="Taylor K."/>
            <person name="Taylor R.G."/>
            <person name="Tivey A."/>
            <person name="Walsh S.V."/>
            <person name="Warren T."/>
            <person name="Whitehead S."/>
            <person name="Woodward J.R."/>
            <person name="Volckaert G."/>
            <person name="Aert R."/>
            <person name="Robben J."/>
            <person name="Grymonprez B."/>
            <person name="Weltjens I."/>
            <person name="Vanstreels E."/>
            <person name="Rieger M."/>
            <person name="Schaefer M."/>
            <person name="Mueller-Auer S."/>
            <person name="Gabel C."/>
            <person name="Fuchs M."/>
            <person name="Duesterhoeft A."/>
            <person name="Fritzc C."/>
            <person name="Holzer E."/>
            <person name="Moestl D."/>
            <person name="Hilbert H."/>
            <person name="Borzym K."/>
            <person name="Langer I."/>
            <person name="Beck A."/>
            <person name="Lehrach H."/>
            <person name="Reinhardt R."/>
            <person name="Pohl T.M."/>
            <person name="Eger P."/>
            <person name="Zimmermann W."/>
            <person name="Wedler H."/>
            <person name="Wambutt R."/>
            <person name="Purnelle B."/>
            <person name="Goffeau A."/>
            <person name="Cadieu E."/>
            <person name="Dreano S."/>
            <person name="Gloux S."/>
            <person name="Lelaure V."/>
            <person name="Mottier S."/>
            <person name="Galibert F."/>
            <person name="Aves S.J."/>
            <person name="Xiang Z."/>
            <person name="Hunt C."/>
            <person name="Moore K."/>
            <person name="Hurst S.M."/>
            <person name="Lucas M."/>
            <person name="Rochet M."/>
            <person name="Gaillardin C."/>
            <person name="Tallada V.A."/>
            <person name="Garzon A."/>
            <person name="Thode G."/>
            <person name="Daga R.R."/>
            <person name="Cruzado L."/>
            <person name="Jimenez J."/>
            <person name="Sanchez M."/>
            <person name="del Rey F."/>
            <person name="Benito J."/>
            <person name="Dominguez A."/>
            <person name="Revuelta J.L."/>
            <person name="Moreno S."/>
            <person name="Armstrong J."/>
            <person name="Forsburg S.L."/>
            <person name="Cerutti L."/>
            <person name="Lowe T."/>
            <person name="McCombie W.R."/>
            <person name="Paulsen I."/>
            <person name="Potashkin J."/>
            <person name="Shpakovski G.V."/>
            <person name="Ussery D."/>
            <person name="Barrell B.G."/>
            <person name="Nurse P."/>
        </authorList>
    </citation>
    <scope>NUCLEOTIDE SEQUENCE [LARGE SCALE GENOMIC DNA]</scope>
    <source>
        <strain>972 / ATCC 24843</strain>
    </source>
</reference>
<reference key="2">
    <citation type="journal article" date="2006" name="Nat. Biotechnol.">
        <title>ORFeome cloning and global analysis of protein localization in the fission yeast Schizosaccharomyces pombe.</title>
        <authorList>
            <person name="Matsuyama A."/>
            <person name="Arai R."/>
            <person name="Yashiroda Y."/>
            <person name="Shirai A."/>
            <person name="Kamata A."/>
            <person name="Sekido S."/>
            <person name="Kobayashi Y."/>
            <person name="Hashimoto A."/>
            <person name="Hamamoto M."/>
            <person name="Hiraoka Y."/>
            <person name="Horinouchi S."/>
            <person name="Yoshida M."/>
        </authorList>
    </citation>
    <scope>SUBCELLULAR LOCATION [LARGE SCALE ANALYSIS]</scope>
</reference>
<reference key="3">
    <citation type="journal article" date="2008" name="J. Proteome Res.">
        <title>Phosphoproteome analysis of fission yeast.</title>
        <authorList>
            <person name="Wilson-Grady J.T."/>
            <person name="Villen J."/>
            <person name="Gygi S.P."/>
        </authorList>
    </citation>
    <scope>PHOSPHORYLATION [LARGE SCALE ANALYSIS] AT SER-284</scope>
    <scope>IDENTIFICATION BY MASS SPECTROMETRY</scope>
</reference>
<protein>
    <recommendedName>
        <fullName evidence="7">Endoplasmic reticulum junction formation protein lunapark</fullName>
    </recommendedName>
    <alternativeName>
        <fullName evidence="2">ER junction formation factor lunapark</fullName>
    </alternativeName>
</protein>
<gene>
    <name type="primary">lnp1</name>
    <name type="ORF">SPCC1620.07c</name>
</gene>
<organism>
    <name type="scientific">Schizosaccharomyces pombe (strain 972 / ATCC 24843)</name>
    <name type="common">Fission yeast</name>
    <dbReference type="NCBI Taxonomy" id="284812"/>
    <lineage>
        <taxon>Eukaryota</taxon>
        <taxon>Fungi</taxon>
        <taxon>Dikarya</taxon>
        <taxon>Ascomycota</taxon>
        <taxon>Taphrinomycotina</taxon>
        <taxon>Schizosaccharomycetes</taxon>
        <taxon>Schizosaccharomycetales</taxon>
        <taxon>Schizosaccharomycetaceae</taxon>
        <taxon>Schizosaccharomyces</taxon>
    </lineage>
</organism>
<proteinExistence type="evidence at protein level"/>
<keyword id="KW-0175">Coiled coil</keyword>
<keyword id="KW-0256">Endoplasmic reticulum</keyword>
<keyword id="KW-0333">Golgi apparatus</keyword>
<keyword id="KW-0472">Membrane</keyword>
<keyword id="KW-0479">Metal-binding</keyword>
<keyword id="KW-0597">Phosphoprotein</keyword>
<keyword id="KW-1185">Reference proteome</keyword>
<keyword id="KW-0812">Transmembrane</keyword>
<keyword id="KW-1133">Transmembrane helix</keyword>
<keyword id="KW-0862">Zinc</keyword>
<keyword id="KW-0863">Zinc-finger</keyword>
<accession>O94414</accession>
<comment type="function">
    <text evidence="1">Plays a role in tubular endoplasmic reticulum network formation and maintenance.</text>
</comment>
<comment type="subcellular location">
    <subcellularLocation>
        <location evidence="5">Endoplasmic reticulum membrane</location>
        <topology evidence="5">Multi-pass membrane protein</topology>
    </subcellularLocation>
    <subcellularLocation>
        <location evidence="5">Golgi apparatus membrane</location>
        <topology evidence="5">Multi-pass membrane protein</topology>
    </subcellularLocation>
    <text evidence="1">Localizes to three-way ER tubule junctions.</text>
</comment>
<comment type="similarity">
    <text evidence="7">Belongs to the lunapark family.</text>
</comment>
<feature type="chain" id="PRO_0000374042" description="Endoplasmic reticulum junction formation protein lunapark">
    <location>
        <begin position="1"/>
        <end position="334"/>
    </location>
</feature>
<feature type="topological domain" description="Cytoplasmic" evidence="1">
    <location>
        <begin position="1"/>
        <end position="40"/>
    </location>
</feature>
<feature type="transmembrane region" description="Helical" evidence="3">
    <location>
        <begin position="41"/>
        <end position="61"/>
    </location>
</feature>
<feature type="topological domain" description="Lumenal" evidence="1">
    <location>
        <begin position="62"/>
        <end position="78"/>
    </location>
</feature>
<feature type="transmembrane region" description="Helical" evidence="3">
    <location>
        <begin position="79"/>
        <end position="99"/>
    </location>
</feature>
<feature type="topological domain" description="Cytoplasmic" evidence="1">
    <location>
        <begin position="100"/>
        <end position="334"/>
    </location>
</feature>
<feature type="zinc finger region" description="C4-type; plays a role in ER morphology" evidence="1">
    <location>
        <begin position="201"/>
        <end position="227"/>
    </location>
</feature>
<feature type="region of interest" description="Disordered" evidence="4">
    <location>
        <begin position="237"/>
        <end position="315"/>
    </location>
</feature>
<feature type="coiled-coil region" evidence="3">
    <location>
        <begin position="12"/>
        <end position="42"/>
    </location>
</feature>
<feature type="coiled-coil region" evidence="3">
    <location>
        <begin position="99"/>
        <end position="127"/>
    </location>
</feature>
<feature type="compositionally biased region" description="Polar residues" evidence="4">
    <location>
        <begin position="239"/>
        <end position="252"/>
    </location>
</feature>
<feature type="compositionally biased region" description="Low complexity" evidence="4">
    <location>
        <begin position="253"/>
        <end position="270"/>
    </location>
</feature>
<feature type="compositionally biased region" description="Polar residues" evidence="4">
    <location>
        <begin position="273"/>
        <end position="283"/>
    </location>
</feature>
<feature type="compositionally biased region" description="Low complexity" evidence="4">
    <location>
        <begin position="297"/>
        <end position="315"/>
    </location>
</feature>
<feature type="modified residue" description="Phosphoserine" evidence="6">
    <location>
        <position position="284"/>
    </location>
</feature>